<proteinExistence type="evidence at transcript level"/>
<feature type="chain" id="PRO_0000300853" description="Chalcone--flavanone isomerase 2-A">
    <location>
        <begin position="1"/>
        <end position="226"/>
    </location>
</feature>
<feature type="binding site" evidence="1">
    <location>
        <position position="49"/>
    </location>
    <ligand>
        <name>substrate</name>
    </ligand>
</feature>
<feature type="binding site" evidence="1">
    <location>
        <position position="114"/>
    </location>
    <ligand>
        <name>substrate</name>
    </ligand>
</feature>
<feature type="binding site" evidence="1">
    <location>
        <position position="191"/>
    </location>
    <ligand>
        <name>substrate</name>
    </ligand>
</feature>
<feature type="site" description="Important for catalytic activity" evidence="1">
    <location>
        <position position="107"/>
    </location>
</feature>
<comment type="function">
    <text evidence="2">Catalyzes the intramolecular cyclization of bicyclic chalcones into tricyclic (S)-flavanones. Responsible for the isomerization of 4,2',4',6'-tetrahydroxychalcone (also termed chalcone) into naringenin.</text>
</comment>
<comment type="catalytic activity">
    <reaction>
        <text>a chalcone = a flavanone.</text>
        <dbReference type="EC" id="5.5.1.6"/>
    </reaction>
</comment>
<comment type="pathway">
    <text>Secondary metabolite biosynthesis; flavonoid biosynthesis.</text>
</comment>
<comment type="tissue specificity">
    <text evidence="2">Mostly expressed in flowers, and, to a lower extent, in roots, shoots, and seeds.</text>
</comment>
<comment type="miscellaneous">
    <text>Part of the biosynthetic pathway for all classes of flavonoids, a large class of secondary plant metabolites, many of which are brightly colored.</text>
</comment>
<comment type="similarity">
    <text evidence="3">Belongs to the chalcone isomerase family.</text>
</comment>
<protein>
    <recommendedName>
        <fullName>Chalcone--flavanone isomerase 2-A</fullName>
        <shortName>Chalcone isomerase 2-A</shortName>
        <ecNumber>5.5.1.6</ecNumber>
    </recommendedName>
</protein>
<accession>Q53B74</accession>
<evidence type="ECO:0000250" key="1"/>
<evidence type="ECO:0000269" key="2">
    <source>
    </source>
</evidence>
<evidence type="ECO:0000305" key="3"/>
<keyword id="KW-0284">Flavonoid biosynthesis</keyword>
<keyword id="KW-0413">Isomerase</keyword>
<keyword id="KW-1185">Reference proteome</keyword>
<name>CFI2A_SOYBN</name>
<reference key="1">
    <citation type="journal article" date="2005" name="Plant Physiol.">
        <title>Partial reconstruction of flavonoid and isoflavonoid biosynthesis in yeast using soybean type I and type II chalcone isomerases.</title>
        <authorList>
            <person name="Ralston L."/>
            <person name="Subramanian S."/>
            <person name="Matsuno M."/>
            <person name="Yu O."/>
        </authorList>
    </citation>
    <scope>NUCLEOTIDE SEQUENCE [MRNA]</scope>
    <scope>FUNCTION</scope>
    <scope>TISSUE SPECIFICITY</scope>
</reference>
<dbReference type="EC" id="5.5.1.6"/>
<dbReference type="EMBL" id="AY595415">
    <property type="protein sequence ID" value="AAT94360.1"/>
    <property type="molecule type" value="mRNA"/>
</dbReference>
<dbReference type="RefSeq" id="NP_001236768.1">
    <property type="nucleotide sequence ID" value="NM_001249839.1"/>
</dbReference>
<dbReference type="SMR" id="Q53B74"/>
<dbReference type="FunCoup" id="Q53B74">
    <property type="interactions" value="1501"/>
</dbReference>
<dbReference type="STRING" id="3847.Q53B74"/>
<dbReference type="PaxDb" id="3847-GLYMA20G38580.1"/>
<dbReference type="GeneID" id="732546"/>
<dbReference type="KEGG" id="gmx:732546"/>
<dbReference type="eggNOG" id="ENOG502QR5P">
    <property type="taxonomic scope" value="Eukaryota"/>
</dbReference>
<dbReference type="InParanoid" id="Q53B74"/>
<dbReference type="OrthoDB" id="1903537at2759"/>
<dbReference type="BRENDA" id="5.5.1.6">
    <property type="organism ID" value="2483"/>
</dbReference>
<dbReference type="UniPathway" id="UPA00154"/>
<dbReference type="Proteomes" id="UP000008827">
    <property type="component" value="Unplaced"/>
</dbReference>
<dbReference type="GO" id="GO:0045430">
    <property type="term" value="F:chalcone isomerase activity"/>
    <property type="evidence" value="ECO:0007669"/>
    <property type="project" value="UniProtKB-EC"/>
</dbReference>
<dbReference type="GO" id="GO:0009813">
    <property type="term" value="P:flavonoid biosynthetic process"/>
    <property type="evidence" value="ECO:0007669"/>
    <property type="project" value="UniProtKB-UniPathway"/>
</dbReference>
<dbReference type="Gene3D" id="1.10.890.20">
    <property type="match status" value="1"/>
</dbReference>
<dbReference type="Gene3D" id="3.50.70.10">
    <property type="match status" value="1"/>
</dbReference>
<dbReference type="InterPro" id="IPR044164">
    <property type="entry name" value="CFI"/>
</dbReference>
<dbReference type="InterPro" id="IPR016087">
    <property type="entry name" value="Chalcone_isomerase"/>
</dbReference>
<dbReference type="InterPro" id="IPR016088">
    <property type="entry name" value="Chalcone_isomerase_3-sand"/>
</dbReference>
<dbReference type="InterPro" id="IPR016089">
    <property type="entry name" value="Chalcone_isomerase_bundle_sf"/>
</dbReference>
<dbReference type="InterPro" id="IPR036298">
    <property type="entry name" value="Chalcone_isomerase_sf"/>
</dbReference>
<dbReference type="PANTHER" id="PTHR28039:SF8">
    <property type="entry name" value="CHALCONE--FLAVANONE ISOMERASE 1-RELATED"/>
    <property type="match status" value="1"/>
</dbReference>
<dbReference type="PANTHER" id="PTHR28039">
    <property type="entry name" value="CHALCONE--FLAVONONE ISOMERASE 1-RELATED"/>
    <property type="match status" value="1"/>
</dbReference>
<dbReference type="Pfam" id="PF02431">
    <property type="entry name" value="Chalcone"/>
    <property type="match status" value="1"/>
</dbReference>
<dbReference type="SUPFAM" id="SSF54626">
    <property type="entry name" value="Chalcone isomerase"/>
    <property type="match status" value="1"/>
</dbReference>
<sequence>MAFPSVTSVTVENVTFPPTVKPPCSPNTFFLAGAGVRGLQIHHAFVKFTAICIYLQYDALSFLSVKWKTKSTHQLTESDQFFSDIVTGPFEKFMQVTMIKPLTGQQYSEKVAENCVAIWRSLGIYTDSEAEAIDKFLSVFKDLTFPPGSSILFTVSPNGSLTISFSGDETIPEVTSAVIENKLLSEAVLESMIGKNGVSPAAKQSLASRLSHLFKEPGVCDPQSHK</sequence>
<organism>
    <name type="scientific">Glycine max</name>
    <name type="common">Soybean</name>
    <name type="synonym">Glycine hispida</name>
    <dbReference type="NCBI Taxonomy" id="3847"/>
    <lineage>
        <taxon>Eukaryota</taxon>
        <taxon>Viridiplantae</taxon>
        <taxon>Streptophyta</taxon>
        <taxon>Embryophyta</taxon>
        <taxon>Tracheophyta</taxon>
        <taxon>Spermatophyta</taxon>
        <taxon>Magnoliopsida</taxon>
        <taxon>eudicotyledons</taxon>
        <taxon>Gunneridae</taxon>
        <taxon>Pentapetalae</taxon>
        <taxon>rosids</taxon>
        <taxon>fabids</taxon>
        <taxon>Fabales</taxon>
        <taxon>Fabaceae</taxon>
        <taxon>Papilionoideae</taxon>
        <taxon>50 kb inversion clade</taxon>
        <taxon>NPAAA clade</taxon>
        <taxon>indigoferoid/millettioid clade</taxon>
        <taxon>Phaseoleae</taxon>
        <taxon>Glycine</taxon>
        <taxon>Glycine subgen. Soja</taxon>
    </lineage>
</organism>
<gene>
    <name type="primary">CHI2-A</name>
    <name type="synonym">CHI2</name>
</gene>